<comment type="function">
    <text evidence="1">Component of the methyl-coenzyme M reductase (MCR) I that catalyzes the reductive cleavage of methyl-coenzyme M (CoM-S-CH3 or 2-(methylthio)ethanesulfonate) using coenzyme B (CoB or 7-mercaptoheptanoylthreonine phosphate) as reductant which results in the production of methane and the mixed heterodisulfide of CoB and CoM (CoM-S-S-CoB). This is the final step in methanogenesis.</text>
</comment>
<comment type="catalytic activity">
    <reaction evidence="1">
        <text>coenzyme B + methyl-coenzyme M = methane + coenzyme M-coenzyme B heterodisulfide</text>
        <dbReference type="Rhea" id="RHEA:12532"/>
        <dbReference type="ChEBI" id="CHEBI:16183"/>
        <dbReference type="ChEBI" id="CHEBI:58286"/>
        <dbReference type="ChEBI" id="CHEBI:58411"/>
        <dbReference type="ChEBI" id="CHEBI:58596"/>
        <dbReference type="EC" id="2.8.4.1"/>
    </reaction>
    <physiologicalReaction direction="left-to-right" evidence="1">
        <dbReference type="Rhea" id="RHEA:12533"/>
    </physiologicalReaction>
</comment>
<comment type="cofactor">
    <cofactor evidence="1">
        <name>coenzyme F430</name>
        <dbReference type="ChEBI" id="CHEBI:60540"/>
    </cofactor>
    <text evidence="1">Binds 2 coenzyme F430 non-covalently per MCR complex. Coenzyme F430 is a yellow nickel porphinoid. Methyl-coenzyme-M reductase is activated when the enzyme-bound coenzyme F430 is reduced to the Ni(I) oxidation state.</text>
</comment>
<comment type="pathway">
    <text evidence="1">One-carbon metabolism; methyl-coenzyme M reduction; methane from methyl-coenzyme M: step 1/1.</text>
</comment>
<comment type="subunit">
    <text evidence="1">MCR is a hexamer of two alpha, two beta, and two gamma chains, forming a dimer of heterotrimers.</text>
</comment>
<comment type="similarity">
    <text evidence="2">Belongs to the methyl-coenzyme M reductase alpha subunit family.</text>
</comment>
<accession>Q60391</accession>
<dbReference type="EC" id="2.8.4.1" evidence="1"/>
<dbReference type="EMBL" id="L77117">
    <property type="protein sequence ID" value="AAB98063.1"/>
    <property type="molecule type" value="Genomic_DNA"/>
</dbReference>
<dbReference type="PIR" id="C64310">
    <property type="entry name" value="C64310"/>
</dbReference>
<dbReference type="RefSeq" id="WP_010869575.1">
    <property type="nucleotide sequence ID" value="NC_000909.1"/>
</dbReference>
<dbReference type="SMR" id="Q60391"/>
<dbReference type="FunCoup" id="Q60391">
    <property type="interactions" value="95"/>
</dbReference>
<dbReference type="STRING" id="243232.MJ_0083"/>
<dbReference type="PaxDb" id="243232-MJ_0083"/>
<dbReference type="EnsemblBacteria" id="AAB98063">
    <property type="protein sequence ID" value="AAB98063"/>
    <property type="gene ID" value="MJ_0083"/>
</dbReference>
<dbReference type="GeneID" id="1450922"/>
<dbReference type="KEGG" id="mja:MJ_0083"/>
<dbReference type="eggNOG" id="arCOG04857">
    <property type="taxonomic scope" value="Archaea"/>
</dbReference>
<dbReference type="HOGENOM" id="CLU_493170_0_0_2"/>
<dbReference type="InParanoid" id="Q60391"/>
<dbReference type="OrthoDB" id="52468at2157"/>
<dbReference type="PhylomeDB" id="Q60391"/>
<dbReference type="UniPathway" id="UPA00646">
    <property type="reaction ID" value="UER00699"/>
</dbReference>
<dbReference type="Proteomes" id="UP000000805">
    <property type="component" value="Chromosome"/>
</dbReference>
<dbReference type="GO" id="GO:0050524">
    <property type="term" value="F:coenzyme-B sulfoethylthiotransferase activity"/>
    <property type="evidence" value="ECO:0007669"/>
    <property type="project" value="UniProtKB-EC"/>
</dbReference>
<dbReference type="GO" id="GO:0046872">
    <property type="term" value="F:metal ion binding"/>
    <property type="evidence" value="ECO:0007669"/>
    <property type="project" value="UniProtKB-KW"/>
</dbReference>
<dbReference type="GO" id="GO:0015948">
    <property type="term" value="P:methanogenesis"/>
    <property type="evidence" value="ECO:0007669"/>
    <property type="project" value="UniProtKB-KW"/>
</dbReference>
<dbReference type="Gene3D" id="3.30.70.470">
    <property type="match status" value="1"/>
</dbReference>
<dbReference type="Gene3D" id="1.20.840.10">
    <property type="entry name" value="Methyl-coenzyme M reductase, alpha/beta subunit, C-terminal"/>
    <property type="match status" value="1"/>
</dbReference>
<dbReference type="Gene3D" id="3.90.390.10">
    <property type="entry name" value="Methyl-coenzyme M Reductase, Chain A, domain 1"/>
    <property type="match status" value="1"/>
</dbReference>
<dbReference type="InterPro" id="IPR016212">
    <property type="entry name" value="Me_CoM_Rdtase_asu"/>
</dbReference>
<dbReference type="InterPro" id="IPR008924">
    <property type="entry name" value="Me_CoM_Rdtase_asu/bsu_C"/>
</dbReference>
<dbReference type="InterPro" id="IPR009047">
    <property type="entry name" value="Me_CoM_Rdtase_asu_C"/>
</dbReference>
<dbReference type="InterPro" id="IPR003183">
    <property type="entry name" value="Me_CoM_Rdtase_asu_N"/>
</dbReference>
<dbReference type="InterPro" id="IPR015811">
    <property type="entry name" value="Me_CoM_Rdtase_asu_N_sub1"/>
</dbReference>
<dbReference type="InterPro" id="IPR015823">
    <property type="entry name" value="Me_CoM_Rdtase_asu_N_sub2"/>
</dbReference>
<dbReference type="InterPro" id="IPR009024">
    <property type="entry name" value="Me_CoM_Rdtase_Fd-like_fold"/>
</dbReference>
<dbReference type="NCBIfam" id="TIGR03256">
    <property type="entry name" value="met_CoM_red_alp"/>
    <property type="match status" value="1"/>
</dbReference>
<dbReference type="Pfam" id="PF02249">
    <property type="entry name" value="MCR_alpha"/>
    <property type="match status" value="1"/>
</dbReference>
<dbReference type="Pfam" id="PF02745">
    <property type="entry name" value="MCR_alpha_N"/>
    <property type="match status" value="1"/>
</dbReference>
<dbReference type="PIRSF" id="PIRSF000262">
    <property type="entry name" value="MCR_alpha"/>
    <property type="match status" value="1"/>
</dbReference>
<dbReference type="SUPFAM" id="SSF48081">
    <property type="entry name" value="Methyl-coenzyme M reductase alpha and beta chain C-terminal domain"/>
    <property type="match status" value="1"/>
</dbReference>
<dbReference type="SUPFAM" id="SSF55088">
    <property type="entry name" value="Methyl-coenzyme M reductase subunits"/>
    <property type="match status" value="1"/>
</dbReference>
<name>MCRX_METJA</name>
<sequence>MDVEKKLFLKALKEKFEEDPKEKYTKFYIFGGWRQSARKREFVEFAQKLIEKRGGIPFYNPDIGVPLGQRKLMTYKISGTDAFVEGDDLHFCNNAAIQQLVDDIKRTVIVGMDTAHAVLEKRLGVEVTPETINEYMETINHALPGGAVVQEHMVEVHPGLVWDCYAKIFTGNDELADEIDKRFLIDINKEFPEEQAEQIKKYIGNRTYQVSRVPTIVVRCCDGGTVSRWSAMQIGMSFITAYKLCAGEAAIADFSYAAKHADVIQMGMILPARRARGPNEPGGVPFGIFADIIQTSRVSDDPAQVTLEVIGAAATFYDQVWLGSYMSGGVGFTQYASATYTDDILDDFVYYGMDYVEKKYGLCGVKPSMEVVKDIATEVTLYGLEQYDEYPALLEDHFGGSQRAGVTAAAAGCSVAFATGNSNAGINGWYLSQILHKEYHSRLGFYGYDLQDQCGAANSLSIRSDEGLLHECRGPNYPNYAMNVGHQPEYAGIAQAPHAARGDAFCLNPIIKVAFADDNLIFDFKWPRKCIAKGALREFEPAGERDLIIPAA</sequence>
<organism>
    <name type="scientific">Methanocaldococcus jannaschii (strain ATCC 43067 / DSM 2661 / JAL-1 / JCM 10045 / NBRC 100440)</name>
    <name type="common">Methanococcus jannaschii</name>
    <dbReference type="NCBI Taxonomy" id="243232"/>
    <lineage>
        <taxon>Archaea</taxon>
        <taxon>Methanobacteriati</taxon>
        <taxon>Methanobacteriota</taxon>
        <taxon>Methanomada group</taxon>
        <taxon>Methanococci</taxon>
        <taxon>Methanococcales</taxon>
        <taxon>Methanocaldococcaceae</taxon>
        <taxon>Methanocaldococcus</taxon>
    </lineage>
</organism>
<reference key="1">
    <citation type="journal article" date="1996" name="Science">
        <title>Complete genome sequence of the methanogenic archaeon, Methanococcus jannaschii.</title>
        <authorList>
            <person name="Bult C.J."/>
            <person name="White O."/>
            <person name="Olsen G.J."/>
            <person name="Zhou L."/>
            <person name="Fleischmann R.D."/>
            <person name="Sutton G.G."/>
            <person name="Blake J.A."/>
            <person name="FitzGerald L.M."/>
            <person name="Clayton R.A."/>
            <person name="Gocayne J.D."/>
            <person name="Kerlavage A.R."/>
            <person name="Dougherty B.A."/>
            <person name="Tomb J.-F."/>
            <person name="Adams M.D."/>
            <person name="Reich C.I."/>
            <person name="Overbeek R."/>
            <person name="Kirkness E.F."/>
            <person name="Weinstock K.G."/>
            <person name="Merrick J.M."/>
            <person name="Glodek A."/>
            <person name="Scott J.L."/>
            <person name="Geoghagen N.S.M."/>
            <person name="Weidman J.F."/>
            <person name="Fuhrmann J.L."/>
            <person name="Nguyen D."/>
            <person name="Utterback T.R."/>
            <person name="Kelley J.M."/>
            <person name="Peterson J.D."/>
            <person name="Sadow P.W."/>
            <person name="Hanna M.C."/>
            <person name="Cotton M.D."/>
            <person name="Roberts K.M."/>
            <person name="Hurst M.A."/>
            <person name="Kaine B.P."/>
            <person name="Borodovsky M."/>
            <person name="Klenk H.-P."/>
            <person name="Fraser C.M."/>
            <person name="Smith H.O."/>
            <person name="Woese C.R."/>
            <person name="Venter J.C."/>
        </authorList>
    </citation>
    <scope>NUCLEOTIDE SEQUENCE [LARGE SCALE GENOMIC DNA]</scope>
    <source>
        <strain>ATCC 43067 / DSM 2661 / JAL-1 / JCM 10045 / NBRC 100440</strain>
    </source>
</reference>
<proteinExistence type="inferred from homology"/>
<feature type="chain" id="PRO_0000147453" description="Methyl-coenzyme M reductase II subunit alpha">
    <location>
        <begin position="1"/>
        <end position="552"/>
    </location>
</feature>
<feature type="binding site" description="axial binding residue" evidence="1">
    <location>
        <position position="150"/>
    </location>
    <ligand>
        <name>coenzyme F430</name>
        <dbReference type="ChEBI" id="CHEBI:60540"/>
    </ligand>
    <ligandPart>
        <name>Ni</name>
        <dbReference type="ChEBI" id="CHEBI:28112"/>
    </ligandPart>
</feature>
<feature type="binding site" description="in chain A" evidence="1">
    <location>
        <position position="228"/>
    </location>
    <ligand>
        <name>coenzyme B</name>
        <dbReference type="ChEBI" id="CHEBI:58596"/>
        <note>ligand shared between two alpha subunits</note>
    </ligand>
</feature>
<feature type="binding site" description="in chain A" evidence="1">
    <location>
        <begin position="259"/>
        <end position="260"/>
    </location>
    <ligand>
        <name>coenzyme B</name>
        <dbReference type="ChEBI" id="CHEBI:58596"/>
        <note>ligand shared between two alpha subunits</note>
    </ligand>
</feature>
<feature type="binding site" description="in chain B" evidence="1">
    <location>
        <position position="273"/>
    </location>
    <ligand>
        <name>coenzyme B</name>
        <dbReference type="ChEBI" id="CHEBI:58596"/>
        <note>ligand shared between two alpha subunits</note>
    </ligand>
</feature>
<feature type="binding site" evidence="1">
    <location>
        <position position="335"/>
    </location>
    <ligand>
        <name>coenzyme M</name>
        <dbReference type="ChEBI" id="CHEBI:58319"/>
    </ligand>
</feature>
<feature type="binding site" evidence="1">
    <location>
        <position position="446"/>
    </location>
    <ligand>
        <name>coenzyme M</name>
        <dbReference type="ChEBI" id="CHEBI:58319"/>
    </ligand>
</feature>
<keyword id="KW-0479">Metal-binding</keyword>
<keyword id="KW-0484">Methanogenesis</keyword>
<keyword id="KW-0488">Methylation</keyword>
<keyword id="KW-0533">Nickel</keyword>
<keyword id="KW-1185">Reference proteome</keyword>
<keyword id="KW-0808">Transferase</keyword>
<protein>
    <recommendedName>
        <fullName>Methyl-coenzyme M reductase II subunit alpha</fullName>
        <shortName>MCR II alpha</shortName>
        <ecNumber evidence="1">2.8.4.1</ecNumber>
    </recommendedName>
    <alternativeName>
        <fullName>Coenzyme-B sulfoethylthiotransferase alpha</fullName>
    </alternativeName>
</protein>
<evidence type="ECO:0000250" key="1">
    <source>
        <dbReference type="UniProtKB" id="P11558"/>
    </source>
</evidence>
<evidence type="ECO:0000305" key="2"/>
<gene>
    <name type="primary">mrtA</name>
    <name type="synonym">mtrA</name>
    <name type="ordered locus">MJ0083</name>
</gene>